<keyword id="KW-0067">ATP-binding</keyword>
<keyword id="KW-0963">Cytoplasm</keyword>
<keyword id="KW-0436">Ligase</keyword>
<keyword id="KW-0460">Magnesium</keyword>
<keyword id="KW-0479">Metal-binding</keyword>
<keyword id="KW-0547">Nucleotide-binding</keyword>
<keyword id="KW-0658">Purine biosynthesis</keyword>
<accession>P65901</accession>
<accession>Q99V28</accession>
<gene>
    <name evidence="1" type="primary">purL</name>
    <name type="ordered locus">SA0921</name>
</gene>
<sequence length="729" mass="79563">MSKFIEPSVEEIKLEKVYQDMGLSDQEYEKVCDILGRQPNFTETGIFSVMWSEHCSYKHSKPFLKQFPTSGEHVLMGPGEGAGVVDIGDNQAVVFKVESHNHPSAIEPYQGAATGVGGIIRDIVSIGARPINLLNSLRFGELDNKQNQRLLKGVVKGIGGYGNCIGIPTTAGEIEFDERYDGNPLVNAMCVGVINHDMIQKGTAKGVGNSVIYVGLKTGRDGIHGATFASEELTEESESKRPSVQIGDPFVGKKLMEATLEAITFDELVGIQDMGAAGLTSSSSEMAAKGGSGLHLRLEQVPTREPGISPYEMMLSETQERMLLVVEKGNEQKFLDLFDKHELDSAVIGEVTDTNRFVLTYDDEVYADIPVEPLADEAPVYILEGEEKDYNTSKNDYTHIDVKDTFFKLLKHPTIASKHYLYDQYDQQVGANTIIKPGLQASVVRVEGTNKAIASTIDGEARYVYNNPYEGGKMVVAEAYRNLIAVGATPLAMTDCLNYGSPEKKEIYQQLIDSTKGMAEACDILKTPVVSGNVSLYNETKGTSIFPTPVVGMVGLIENVNYLNDFEPQVGDKLYLIGDTKDDFGGSQLEKLIYGKVNHEFESLDLSSEVEKGESIKTAIREGLLSHVQTVGKGGLLITLAKLSAHYGLGLKSSIDITNAQLFSETQGRYVVSVKSGKTLNIDNAIEIGLLTDSDNFKVTTPYTEISENVSDIKQIWEGAIAQCLTTQD</sequence>
<organism>
    <name type="scientific">Staphylococcus aureus (strain N315)</name>
    <dbReference type="NCBI Taxonomy" id="158879"/>
    <lineage>
        <taxon>Bacteria</taxon>
        <taxon>Bacillati</taxon>
        <taxon>Bacillota</taxon>
        <taxon>Bacilli</taxon>
        <taxon>Bacillales</taxon>
        <taxon>Staphylococcaceae</taxon>
        <taxon>Staphylococcus</taxon>
    </lineage>
</organism>
<feature type="chain" id="PRO_0000100487" description="Phosphoribosylformylglycinamidine synthase subunit PurL">
    <location>
        <begin position="1"/>
        <end position="729"/>
    </location>
</feature>
<feature type="active site" evidence="1">
    <location>
        <position position="54"/>
    </location>
</feature>
<feature type="active site" description="Proton acceptor" evidence="1">
    <location>
        <position position="100"/>
    </location>
</feature>
<feature type="binding site" evidence="1">
    <location>
        <position position="57"/>
    </location>
    <ligand>
        <name>ATP</name>
        <dbReference type="ChEBI" id="CHEBI:30616"/>
    </ligand>
</feature>
<feature type="binding site" evidence="1">
    <location>
        <position position="96"/>
    </location>
    <ligand>
        <name>ATP</name>
        <dbReference type="ChEBI" id="CHEBI:30616"/>
    </ligand>
</feature>
<feature type="binding site" evidence="1">
    <location>
        <position position="98"/>
    </location>
    <ligand>
        <name>Mg(2+)</name>
        <dbReference type="ChEBI" id="CHEBI:18420"/>
        <label>1</label>
    </ligand>
</feature>
<feature type="binding site" evidence="1">
    <location>
        <begin position="99"/>
        <end position="102"/>
    </location>
    <ligand>
        <name>substrate</name>
    </ligand>
</feature>
<feature type="binding site" evidence="1">
    <location>
        <position position="121"/>
    </location>
    <ligand>
        <name>substrate</name>
    </ligand>
</feature>
<feature type="binding site" evidence="1">
    <location>
        <position position="122"/>
    </location>
    <ligand>
        <name>Mg(2+)</name>
        <dbReference type="ChEBI" id="CHEBI:18420"/>
        <label>2</label>
    </ligand>
</feature>
<feature type="binding site" evidence="1">
    <location>
        <position position="245"/>
    </location>
    <ligand>
        <name>substrate</name>
    </ligand>
</feature>
<feature type="binding site" evidence="1">
    <location>
        <position position="273"/>
    </location>
    <ligand>
        <name>Mg(2+)</name>
        <dbReference type="ChEBI" id="CHEBI:18420"/>
        <label>2</label>
    </ligand>
</feature>
<feature type="binding site" evidence="1">
    <location>
        <begin position="317"/>
        <end position="319"/>
    </location>
    <ligand>
        <name>substrate</name>
    </ligand>
</feature>
<feature type="binding site" evidence="1">
    <location>
        <position position="495"/>
    </location>
    <ligand>
        <name>ATP</name>
        <dbReference type="ChEBI" id="CHEBI:30616"/>
    </ligand>
</feature>
<feature type="binding site" evidence="1">
    <location>
        <position position="532"/>
    </location>
    <ligand>
        <name>ATP</name>
        <dbReference type="ChEBI" id="CHEBI:30616"/>
    </ligand>
</feature>
<feature type="binding site" evidence="1">
    <location>
        <position position="533"/>
    </location>
    <ligand>
        <name>Mg(2+)</name>
        <dbReference type="ChEBI" id="CHEBI:18420"/>
        <label>1</label>
    </ligand>
</feature>
<feature type="binding site" evidence="1">
    <location>
        <position position="535"/>
    </location>
    <ligand>
        <name>substrate</name>
    </ligand>
</feature>
<name>PURL_STAAN</name>
<evidence type="ECO:0000255" key="1">
    <source>
        <dbReference type="HAMAP-Rule" id="MF_00420"/>
    </source>
</evidence>
<comment type="function">
    <text evidence="1">Part of the phosphoribosylformylglycinamidine synthase complex involved in the purines biosynthetic pathway. Catalyzes the ATP-dependent conversion of formylglycinamide ribonucleotide (FGAR) and glutamine to yield formylglycinamidine ribonucleotide (FGAM) and glutamate. The FGAM synthase complex is composed of three subunits. PurQ produces an ammonia molecule by converting glutamine to glutamate. PurL transfers the ammonia molecule to FGAR to form FGAM in an ATP-dependent manner. PurS interacts with PurQ and PurL and is thought to assist in the transfer of the ammonia molecule from PurQ to PurL.</text>
</comment>
<comment type="catalytic activity">
    <reaction evidence="1">
        <text>N(2)-formyl-N(1)-(5-phospho-beta-D-ribosyl)glycinamide + L-glutamine + ATP + H2O = 2-formamido-N(1)-(5-O-phospho-beta-D-ribosyl)acetamidine + L-glutamate + ADP + phosphate + H(+)</text>
        <dbReference type="Rhea" id="RHEA:17129"/>
        <dbReference type="ChEBI" id="CHEBI:15377"/>
        <dbReference type="ChEBI" id="CHEBI:15378"/>
        <dbReference type="ChEBI" id="CHEBI:29985"/>
        <dbReference type="ChEBI" id="CHEBI:30616"/>
        <dbReference type="ChEBI" id="CHEBI:43474"/>
        <dbReference type="ChEBI" id="CHEBI:58359"/>
        <dbReference type="ChEBI" id="CHEBI:147286"/>
        <dbReference type="ChEBI" id="CHEBI:147287"/>
        <dbReference type="ChEBI" id="CHEBI:456216"/>
        <dbReference type="EC" id="6.3.5.3"/>
    </reaction>
</comment>
<comment type="pathway">
    <text evidence="1">Purine metabolism; IMP biosynthesis via de novo pathway; 5-amino-1-(5-phospho-D-ribosyl)imidazole from N(2)-formyl-N(1)-(5-phospho-D-ribosyl)glycinamide: step 1/2.</text>
</comment>
<comment type="subunit">
    <text evidence="1">Monomer. Part of the FGAM synthase complex composed of 1 PurL, 1 PurQ and 2 PurS subunits.</text>
</comment>
<comment type="subcellular location">
    <subcellularLocation>
        <location evidence="1">Cytoplasm</location>
    </subcellularLocation>
</comment>
<comment type="similarity">
    <text evidence="1">Belongs to the FGAMS family.</text>
</comment>
<proteinExistence type="evidence at protein level"/>
<dbReference type="EC" id="6.3.5.3" evidence="1"/>
<dbReference type="EMBL" id="BA000018">
    <property type="protein sequence ID" value="BAB42166.1"/>
    <property type="molecule type" value="Genomic_DNA"/>
</dbReference>
<dbReference type="PIR" id="C89876">
    <property type="entry name" value="C89876"/>
</dbReference>
<dbReference type="RefSeq" id="WP_000032740.1">
    <property type="nucleotide sequence ID" value="NC_002745.2"/>
</dbReference>
<dbReference type="SMR" id="P65901"/>
<dbReference type="EnsemblBacteria" id="BAB42166">
    <property type="protein sequence ID" value="BAB42166"/>
    <property type="gene ID" value="BAB42166"/>
</dbReference>
<dbReference type="KEGG" id="sau:SA0921"/>
<dbReference type="HOGENOM" id="CLU_003100_0_1_9"/>
<dbReference type="UniPathway" id="UPA00074">
    <property type="reaction ID" value="UER00128"/>
</dbReference>
<dbReference type="GO" id="GO:0005737">
    <property type="term" value="C:cytoplasm"/>
    <property type="evidence" value="ECO:0007669"/>
    <property type="project" value="UniProtKB-SubCell"/>
</dbReference>
<dbReference type="GO" id="GO:0005524">
    <property type="term" value="F:ATP binding"/>
    <property type="evidence" value="ECO:0007669"/>
    <property type="project" value="UniProtKB-UniRule"/>
</dbReference>
<dbReference type="GO" id="GO:0000287">
    <property type="term" value="F:magnesium ion binding"/>
    <property type="evidence" value="ECO:0007669"/>
    <property type="project" value="UniProtKB-UniRule"/>
</dbReference>
<dbReference type="GO" id="GO:0004642">
    <property type="term" value="F:phosphoribosylformylglycinamidine synthase activity"/>
    <property type="evidence" value="ECO:0007669"/>
    <property type="project" value="UniProtKB-UniRule"/>
</dbReference>
<dbReference type="GO" id="GO:0006189">
    <property type="term" value="P:'de novo' IMP biosynthetic process"/>
    <property type="evidence" value="ECO:0007669"/>
    <property type="project" value="UniProtKB-UniRule"/>
</dbReference>
<dbReference type="CDD" id="cd02203">
    <property type="entry name" value="PurL_repeat1"/>
    <property type="match status" value="1"/>
</dbReference>
<dbReference type="CDD" id="cd02204">
    <property type="entry name" value="PurL_repeat2"/>
    <property type="match status" value="1"/>
</dbReference>
<dbReference type="FunFam" id="3.30.1330.10:FF:000004">
    <property type="entry name" value="Phosphoribosylformylglycinamidine synthase subunit PurL"/>
    <property type="match status" value="1"/>
</dbReference>
<dbReference type="Gene3D" id="3.90.650.10">
    <property type="entry name" value="PurM-like C-terminal domain"/>
    <property type="match status" value="2"/>
</dbReference>
<dbReference type="Gene3D" id="3.30.1330.10">
    <property type="entry name" value="PurM-like, N-terminal domain"/>
    <property type="match status" value="2"/>
</dbReference>
<dbReference type="HAMAP" id="MF_00420">
    <property type="entry name" value="PurL_2"/>
    <property type="match status" value="1"/>
</dbReference>
<dbReference type="InterPro" id="IPR010074">
    <property type="entry name" value="PRibForGlyAmidine_synth_PurL"/>
</dbReference>
<dbReference type="InterPro" id="IPR041609">
    <property type="entry name" value="PurL_linker"/>
</dbReference>
<dbReference type="InterPro" id="IPR010918">
    <property type="entry name" value="PurM-like_C_dom"/>
</dbReference>
<dbReference type="InterPro" id="IPR036676">
    <property type="entry name" value="PurM-like_C_sf"/>
</dbReference>
<dbReference type="InterPro" id="IPR016188">
    <property type="entry name" value="PurM-like_N"/>
</dbReference>
<dbReference type="InterPro" id="IPR036921">
    <property type="entry name" value="PurM-like_N_sf"/>
</dbReference>
<dbReference type="NCBIfam" id="TIGR01736">
    <property type="entry name" value="FGAM_synth_II"/>
    <property type="match status" value="1"/>
</dbReference>
<dbReference type="NCBIfam" id="NF002290">
    <property type="entry name" value="PRK01213.1"/>
    <property type="match status" value="1"/>
</dbReference>
<dbReference type="PANTHER" id="PTHR43555">
    <property type="entry name" value="PHOSPHORIBOSYLFORMYLGLYCINAMIDINE SYNTHASE SUBUNIT PURL"/>
    <property type="match status" value="1"/>
</dbReference>
<dbReference type="PANTHER" id="PTHR43555:SF1">
    <property type="entry name" value="PHOSPHORIBOSYLFORMYLGLYCINAMIDINE SYNTHASE SUBUNIT PURL"/>
    <property type="match status" value="1"/>
</dbReference>
<dbReference type="Pfam" id="PF00586">
    <property type="entry name" value="AIRS"/>
    <property type="match status" value="2"/>
</dbReference>
<dbReference type="Pfam" id="PF02769">
    <property type="entry name" value="AIRS_C"/>
    <property type="match status" value="1"/>
</dbReference>
<dbReference type="Pfam" id="PF18072">
    <property type="entry name" value="FGAR-AT_linker"/>
    <property type="match status" value="1"/>
</dbReference>
<dbReference type="PIRSF" id="PIRSF001587">
    <property type="entry name" value="FGAM_synthase_II"/>
    <property type="match status" value="1"/>
</dbReference>
<dbReference type="SUPFAM" id="SSF56042">
    <property type="entry name" value="PurM C-terminal domain-like"/>
    <property type="match status" value="2"/>
</dbReference>
<dbReference type="SUPFAM" id="SSF55326">
    <property type="entry name" value="PurM N-terminal domain-like"/>
    <property type="match status" value="2"/>
</dbReference>
<protein>
    <recommendedName>
        <fullName evidence="1">Phosphoribosylformylglycinamidine synthase subunit PurL</fullName>
        <shortName evidence="1">FGAM synthase</shortName>
        <ecNumber evidence="1">6.3.5.3</ecNumber>
    </recommendedName>
    <alternativeName>
        <fullName evidence="1">Formylglycinamide ribonucleotide amidotransferase subunit II</fullName>
        <shortName evidence="1">FGAR amidotransferase II</shortName>
        <shortName evidence="1">FGAR-AT II</shortName>
    </alternativeName>
    <alternativeName>
        <fullName evidence="1">Glutamine amidotransferase PurL</fullName>
    </alternativeName>
    <alternativeName>
        <fullName evidence="1">Phosphoribosylformylglycinamidine synthase subunit II</fullName>
    </alternativeName>
</protein>
<reference key="1">
    <citation type="journal article" date="2001" name="Lancet">
        <title>Whole genome sequencing of meticillin-resistant Staphylococcus aureus.</title>
        <authorList>
            <person name="Kuroda M."/>
            <person name="Ohta T."/>
            <person name="Uchiyama I."/>
            <person name="Baba T."/>
            <person name="Yuzawa H."/>
            <person name="Kobayashi I."/>
            <person name="Cui L."/>
            <person name="Oguchi A."/>
            <person name="Aoki K."/>
            <person name="Nagai Y."/>
            <person name="Lian J.-Q."/>
            <person name="Ito T."/>
            <person name="Kanamori M."/>
            <person name="Matsumaru H."/>
            <person name="Maruyama A."/>
            <person name="Murakami H."/>
            <person name="Hosoyama A."/>
            <person name="Mizutani-Ui Y."/>
            <person name="Takahashi N.K."/>
            <person name="Sawano T."/>
            <person name="Inoue R."/>
            <person name="Kaito C."/>
            <person name="Sekimizu K."/>
            <person name="Hirakawa H."/>
            <person name="Kuhara S."/>
            <person name="Goto S."/>
            <person name="Yabuzaki J."/>
            <person name="Kanehisa M."/>
            <person name="Yamashita A."/>
            <person name="Oshima K."/>
            <person name="Furuya K."/>
            <person name="Yoshino C."/>
            <person name="Shiba T."/>
            <person name="Hattori M."/>
            <person name="Ogasawara N."/>
            <person name="Hayashi H."/>
            <person name="Hiramatsu K."/>
        </authorList>
    </citation>
    <scope>NUCLEOTIDE SEQUENCE [LARGE SCALE GENOMIC DNA]</scope>
    <source>
        <strain>N315</strain>
    </source>
</reference>
<reference key="2">
    <citation type="submission" date="2007-10" db="UniProtKB">
        <title>Shotgun proteomic analysis of total and membrane protein extracts of S. aureus strain N315.</title>
        <authorList>
            <person name="Vaezzadeh A.R."/>
            <person name="Deshusses J."/>
            <person name="Lescuyer P."/>
            <person name="Hochstrasser D.F."/>
        </authorList>
    </citation>
    <scope>IDENTIFICATION BY MASS SPECTROMETRY [LARGE SCALE ANALYSIS]</scope>
    <source>
        <strain>N315</strain>
    </source>
</reference>